<sequence length="116" mass="12691">MSATAATVPPAAPAGEGGPPAPPPNLTSNRRLQQTQAQVDEVVDIMRVNVDKVLERDQKLSELDDRADALQAGASQFETSAAKLKRKYWWKNLKMMIILGVICAIILIIIIVYFST</sequence>
<reference key="1">
    <citation type="journal article" date="1989" name="J. Biol. Chem.">
        <title>Two vesicle-associated membrane protein genes are differentially expressed in the rat central nervous system.</title>
        <authorList>
            <person name="Elferink L.A."/>
            <person name="Trimble W.S."/>
            <person name="Scheller R.H."/>
        </authorList>
    </citation>
    <scope>NUCLEOTIDE SEQUENCE [MRNA]</scope>
    <scope>TISSUE SPECIFICITY</scope>
    <source>
        <tissue>Brain</tissue>
    </source>
</reference>
<reference key="2">
    <citation type="journal article" date="2004" name="Genome Res.">
        <title>The status, quality, and expansion of the NIH full-length cDNA project: the Mammalian Gene Collection (MGC).</title>
        <authorList>
            <consortium name="The MGC Project Team"/>
        </authorList>
    </citation>
    <scope>NUCLEOTIDE SEQUENCE [LARGE SCALE MRNA]</scope>
    <source>
        <tissue>Lung</tissue>
    </source>
</reference>
<reference key="3">
    <citation type="submission" date="2009-01" db="UniProtKB">
        <authorList>
            <person name="Lubec G."/>
            <person name="Chen W.-Q."/>
        </authorList>
    </citation>
    <scope>PROTEIN SEQUENCE OF 32-47 AND 60-83</scope>
    <scope>IDENTIFICATION BY MASS SPECTROMETRY</scope>
    <source>
        <strain>Sprague-Dawley</strain>
        <tissue>Hippocampus</tissue>
    </source>
</reference>
<reference key="4">
    <citation type="journal article" date="2017" name="Nat. Commun.">
        <title>Identification and characterization of a novel botulinum neurotoxin.</title>
        <authorList>
            <person name="Zhang S."/>
            <person name="Masuyer G."/>
            <person name="Zhang J."/>
            <person name="Shen Y."/>
            <person name="Lundin D."/>
            <person name="Henriksson L."/>
            <person name="Miyashita S.I."/>
            <person name="Martinez-Carranza M."/>
            <person name="Dong M."/>
            <person name="Stenmark P."/>
        </authorList>
    </citation>
    <scope>PROTEIN SEQUENCE OF 33-86</scope>
    <scope>PROTEOLYTIC CLEAVAGE (MICROBIAL INFECTION) BY C.BOTULINUM NEUROTOXIN TYPE X</scope>
</reference>
<reference key="5">
    <citation type="journal article" date="1992" name="Nature">
        <title>Tetanus and botulinum-B neurotoxins block neurotransmitter release by proteolytic cleavage of synaptobrevin.</title>
        <authorList>
            <person name="Schiavo G."/>
            <person name="Benfenati F."/>
            <person name="Poulain B."/>
            <person name="Rossetto O."/>
            <person name="de Laureto P.P."/>
            <person name="Dasgupta B.R."/>
            <person name="Montecucco C."/>
        </authorList>
    </citation>
    <scope>PROTEIN SEQUENCE OF 77-101</scope>
    <scope>POSSIBLE FUNCTION</scope>
    <scope>PROTEOLYTIC CLEAVAGE (MICROBIAL INFECTION) BY C.BOTULINUM NEUROTOXIN TYPE B AND BY C.TETANI TETANUS TOXIN</scope>
</reference>
<reference key="6">
    <citation type="journal article" date="1993" name="J. Biol. Chem.">
        <title>Botulinum neurotoxin serotype F is a zinc endopeptidase specific for VAMP/synaptobrevin.</title>
        <authorList>
            <person name="Schiavo G."/>
            <person name="Shone C.C."/>
            <person name="Rossetto O."/>
            <person name="Alexander F.C."/>
            <person name="Montecucco C."/>
        </authorList>
    </citation>
    <scope>PROTEIN SEQUENCE OF 59-82</scope>
    <scope>PROTEOLYTIC CLEAVAGE (MICROBIAL INFECTION) BY C.BOTULINUM NEUROTOXIN TYPE F</scope>
</reference>
<reference key="7">
    <citation type="journal article" date="1994" name="Biochem. Biophys. Res. Commun.">
        <title>Botulinum neurotoxin type G proteolyses the Ala81-Ala82 bond of rat synaptobrevin 2.</title>
        <authorList>
            <person name="Yamasaki S."/>
            <person name="Binz T."/>
            <person name="Hayashi T."/>
            <person name="Szabo E."/>
            <person name="Yamasaki N."/>
            <person name="Eklund M."/>
            <person name="Jahn R."/>
            <person name="Niemann H."/>
        </authorList>
    </citation>
    <scope>PROTEOLYTIC CLEAVAGE (MICROBIAL INFECTION) BY C.BOTULINUM NEUROTOXIN TYPE G</scope>
</reference>
<reference key="8">
    <citation type="journal article" date="1994" name="J. Biol. Chem.">
        <title>Cleavage of members of the synaptobrevin/VAMP family by types D and F botulinal neurotoxins and tetanus toxin.</title>
        <authorList>
            <person name="Yamasaki S."/>
            <person name="Baumeister A."/>
            <person name="Binz T."/>
            <person name="Blasi J."/>
            <person name="Link E."/>
            <person name="Cornille F."/>
            <person name="Roques B."/>
            <person name="Fykse E.M."/>
            <person name="Suedhof T.C."/>
            <person name="Jahn R."/>
            <person name="Niemann H."/>
        </authorList>
    </citation>
    <scope>PROTEOLYTIC CLEAVAGE (MICROBIAL INFECTION) BY C.BOTULINUM NEUROTOXIN TYPES D AND F AND BY C.TETANI TETANUS TOXIN</scope>
</reference>
<reference key="9">
    <citation type="journal article" date="2009" name="J. Biol. Chem.">
        <title>Rearrangements in the relative orientation of cytoplasmic domains induced by a membrane-anchored protein mediate modulations in Kv channel gating.</title>
        <authorList>
            <person name="Lvov A."/>
            <person name="Greitzer D."/>
            <person name="Berlin S."/>
            <person name="Chikvashvili D."/>
            <person name="Tsuk S."/>
            <person name="Lotan I."/>
            <person name="Michaelevski I."/>
        </authorList>
    </citation>
    <scope>FUNCTION</scope>
    <scope>INTERACTION WITH KCNB1</scope>
    <scope>SUBCELLULAR LOCATION</scope>
</reference>
<reference key="10">
    <citation type="journal article" date="2009" name="J. Neurochem.">
        <title>Sept8 controls the binding of vesicle-associated membrane protein 2 to synaptophysin.</title>
        <authorList>
            <person name="Ito H."/>
            <person name="Atsuzawa K."/>
            <person name="Morishita R."/>
            <person name="Usuda N."/>
            <person name="Sudo K."/>
            <person name="Iwamoto I."/>
            <person name="Mizutani K."/>
            <person name="Katoh-Semba R."/>
            <person name="Nozawa Y."/>
            <person name="Asano T."/>
            <person name="Nagata K."/>
        </authorList>
    </citation>
    <scope>INTERACTION WITH SEPT8; SYP; SNAP25 AND STX1A</scope>
    <scope>TISSUE SPECIFICITY</scope>
</reference>
<reference key="11">
    <citation type="journal article" date="1998" name="Nature">
        <title>Crystal structure of a SNARE complex involved in synaptic exocytosis at 2.4 A resolution.</title>
        <authorList>
            <person name="Sutton R.B."/>
            <person name="Fasshauer D."/>
            <person name="Jahn R."/>
            <person name="Brunger A.T."/>
        </authorList>
    </citation>
    <scope>X-RAY CRYSTALLOGRAPHY (2.4 ANGSTROMS) OF 1-97 IN COMPLEX WITH STX1A AND SNAP25</scope>
</reference>
<reference key="12">
    <citation type="journal article" date="2002" name="Neuron">
        <title>Three-dimensional structure of the complexin/SNARE complex.</title>
        <authorList>
            <person name="Chen X."/>
            <person name="Tomchick D.R."/>
            <person name="Kovrigin E."/>
            <person name="Arac D."/>
            <person name="Machius M."/>
            <person name="Suedhof T.C."/>
            <person name="Rizo J."/>
        </authorList>
    </citation>
    <scope>X-RAY CRYSTALLOGRAPHY (2.3 ANGSTROMS) OF 30-94 IN COMPLEX WITH STX1A; CPLX1 AND SNAP25</scope>
    <scope>STRUCTURE BY NMR</scope>
</reference>
<reference key="13">
    <citation type="journal article" date="2003" name="J. Biol. Chem.">
        <title>High resolution structure, stability, and synaptotagmin binding of a truncated neuronal SNARE complex.</title>
        <authorList>
            <person name="Ernst J.A."/>
            <person name="Brunger A.T."/>
        </authorList>
    </citation>
    <scope>X-RAY CRYSTALLOGRAPHY (1.45 ANGSTROMS) OF 29-90 IN COMPLEX WITH STX1A AND SNAP25</scope>
</reference>
<name>VAMP2_RAT</name>
<evidence type="ECO:0000250" key="1">
    <source>
        <dbReference type="UniProtKB" id="P63026"/>
    </source>
</evidence>
<evidence type="ECO:0000250" key="2">
    <source>
        <dbReference type="UniProtKB" id="P63027"/>
    </source>
</evidence>
<evidence type="ECO:0000250" key="3">
    <source>
        <dbReference type="UniProtKB" id="P63044"/>
    </source>
</evidence>
<evidence type="ECO:0000255" key="4"/>
<evidence type="ECO:0000255" key="5">
    <source>
        <dbReference type="PROSITE-ProRule" id="PRU00290"/>
    </source>
</evidence>
<evidence type="ECO:0000256" key="6">
    <source>
        <dbReference type="SAM" id="MobiDB-lite"/>
    </source>
</evidence>
<evidence type="ECO:0000269" key="7">
    <source>
    </source>
</evidence>
<evidence type="ECO:0000269" key="8">
    <source>
    </source>
</evidence>
<evidence type="ECO:0000269" key="9">
    <source>
    </source>
</evidence>
<evidence type="ECO:0000269" key="10">
    <source>
    </source>
</evidence>
<evidence type="ECO:0000269" key="11">
    <source>
    </source>
</evidence>
<evidence type="ECO:0000269" key="12">
    <source>
    </source>
</evidence>
<evidence type="ECO:0000269" key="13">
    <source>
    </source>
</evidence>
<evidence type="ECO:0000269" key="14">
    <source>
    </source>
</evidence>
<evidence type="ECO:0000305" key="15"/>
<evidence type="ECO:0000305" key="16">
    <source>
    </source>
</evidence>
<evidence type="ECO:0000305" key="17">
    <source>
    </source>
</evidence>
<evidence type="ECO:0007829" key="18">
    <source>
        <dbReference type="PDB" id="1N7S"/>
    </source>
</evidence>
<evidence type="ECO:0007829" key="19">
    <source>
        <dbReference type="PDB" id="2KOG"/>
    </source>
</evidence>
<accession>P63045</accession>
<accession>Q64357</accession>
<feature type="initiator methionine" description="Removed" evidence="1">
    <location>
        <position position="1"/>
    </location>
</feature>
<feature type="chain" id="PRO_0000206726" description="Vesicle-associated membrane protein 2">
    <location>
        <begin position="2"/>
        <end position="116"/>
    </location>
</feature>
<feature type="topological domain" description="Cytoplasmic" evidence="4">
    <location>
        <begin position="2"/>
        <end position="94"/>
    </location>
</feature>
<feature type="transmembrane region" description="Helical; Anchor for type IV membrane protein" evidence="4">
    <location>
        <begin position="95"/>
        <end position="114"/>
    </location>
</feature>
<feature type="topological domain" description="Vesicular" evidence="4">
    <location>
        <begin position="115"/>
        <end position="116"/>
    </location>
</feature>
<feature type="domain" description="v-SNARE coiled-coil homology" evidence="5">
    <location>
        <begin position="31"/>
        <end position="91"/>
    </location>
</feature>
<feature type="region of interest" description="Disordered" evidence="6">
    <location>
        <begin position="1"/>
        <end position="28"/>
    </location>
</feature>
<feature type="region of interest" description="Required for interaction with SEPT8" evidence="8">
    <location>
        <begin position="92"/>
        <end position="116"/>
    </location>
</feature>
<feature type="site" description="(Microbial infection) Cleavage; by C.botulinum neurotoxin type F (BoNT/F, botF)" evidence="14">
    <location>
        <begin position="58"/>
        <end position="59"/>
    </location>
</feature>
<feature type="site" description="(Microbial infection) Cleavage; by C.botulinum neurotoxin type D (BoNT/D, botD)" evidence="13">
    <location>
        <begin position="59"/>
        <end position="60"/>
    </location>
</feature>
<feature type="site" description="(Microbial infection) Cleavage; by C.botulinum neurotoxin type X (BoNT/X)" evidence="11">
    <location>
        <begin position="66"/>
        <end position="67"/>
    </location>
</feature>
<feature type="site" description="(Microbial infection) Cleavage; by C.botulinum neurotoxin type B (BoNT/B, botB)" evidence="7">
    <location>
        <begin position="76"/>
        <end position="77"/>
    </location>
</feature>
<feature type="site" description="(Microbial infection) Cleavage; by C.tetani tetanus toxin (tetX)" evidence="7">
    <location>
        <begin position="76"/>
        <end position="77"/>
    </location>
</feature>
<feature type="site" description="(Microbial infection) Cleavage; by C.botulinum neurotoxin type G (BoNT/G, botG)" evidence="12">
    <location>
        <begin position="81"/>
        <end position="82"/>
    </location>
</feature>
<feature type="modified residue" description="N-acetylserine" evidence="1">
    <location>
        <position position="2"/>
    </location>
</feature>
<feature type="strand" evidence="19">
    <location>
        <begin position="25"/>
        <end position="28"/>
    </location>
</feature>
<feature type="helix" evidence="18">
    <location>
        <begin position="29"/>
        <end position="88"/>
    </location>
</feature>
<feature type="helix" evidence="19">
    <location>
        <begin position="91"/>
        <end position="115"/>
    </location>
</feature>
<keyword id="KW-0002">3D-structure</keyword>
<keyword id="KW-0007">Acetylation</keyword>
<keyword id="KW-1003">Cell membrane</keyword>
<keyword id="KW-0175">Coiled coil</keyword>
<keyword id="KW-0968">Cytoplasmic vesicle</keyword>
<keyword id="KW-0903">Direct protein sequencing</keyword>
<keyword id="KW-0472">Membrane</keyword>
<keyword id="KW-0597">Phosphoprotein</keyword>
<keyword id="KW-1185">Reference proteome</keyword>
<keyword id="KW-0770">Synapse</keyword>
<keyword id="KW-0812">Transmembrane</keyword>
<keyword id="KW-1133">Transmembrane helix</keyword>
<gene>
    <name type="primary">Vamp2</name>
    <name type="synonym">Syb2</name>
</gene>
<proteinExistence type="evidence at protein level"/>
<organism>
    <name type="scientific">Rattus norvegicus</name>
    <name type="common">Rat</name>
    <dbReference type="NCBI Taxonomy" id="10116"/>
    <lineage>
        <taxon>Eukaryota</taxon>
        <taxon>Metazoa</taxon>
        <taxon>Chordata</taxon>
        <taxon>Craniata</taxon>
        <taxon>Vertebrata</taxon>
        <taxon>Euteleostomi</taxon>
        <taxon>Mammalia</taxon>
        <taxon>Eutheria</taxon>
        <taxon>Euarchontoglires</taxon>
        <taxon>Glires</taxon>
        <taxon>Rodentia</taxon>
        <taxon>Myomorpha</taxon>
        <taxon>Muroidea</taxon>
        <taxon>Muridae</taxon>
        <taxon>Murinae</taxon>
        <taxon>Rattus</taxon>
    </lineage>
</organism>
<comment type="function">
    <text evidence="3 9 16">Involved in the targeting and/or fusion of transport vesicles to their target membrane (By similarity). Major SNARE protein of synaptic vesicles which mediates fusion of synaptic vesicles to release neurotransmitters. Essential for fast vesicular exocytosis and activity-dependent neurotransmitter release as well as fast endocytosis that mediates rapid reuse of synaptic vesicles (Probable). Modulates the gating characteristics of the delayed rectifier voltage-dependent potassium channel KCNB1 (PubMed:19690160).</text>
</comment>
<comment type="subunit">
    <text evidence="2 3 8 9">Part of the SNARE core complex containing SNAP25, VAMP2 and STX1A; this complex constitutes the basic catalytic machinery of the complex neurotransmitter release apparatus (PubMed:19196426). Recruited to the SNARE complex following binding of the SNARE complex component STX1A to STXBP1 (By similarity). This complex binds to CPLX1. Interacts with POPDC1 and STX4. Interacts with VAPA and VAPB. Interacts with WDFY2, PRKCZ and PRKCI (By similarity). Interacts (via N-terminus) with KCNB1 (via N-terminus and C-terminus); stimulates the channel inactivation rate of KCNB1 (PubMed:19690160). Forms a complex with WDFY2 and PRKCZ (By similarity). Interacts with SEPT8; the interaction inhibits interaction of VAMP2 with SYP (PubMed:19196426). Interacts with SYP; the interaction is inhibited by interaction with SEPT8 (PubMed:19196426). Interacts with PICALM (By similarity). Interacts with alpha-synuclein/SNCA (By similarity). Interacts with STX3 (By similarity).</text>
</comment>
<comment type="interaction">
    <interactant intactId="EBI-520880">
        <id>P63045</id>
    </interactant>
    <interactant intactId="EBI-1255458">
        <id>D4A229</id>
        <label>Prkd3</label>
    </interactant>
    <organismsDiffer>false</organismsDiffer>
    <experiments>2</experiments>
</comment>
<comment type="interaction">
    <interactant intactId="EBI-520880">
        <id>P63045</id>
    </interactant>
    <interactant intactId="EBI-15685612">
        <id>P60881-2</id>
        <label>Snap25</label>
    </interactant>
    <organismsDiffer>false</organismsDiffer>
    <experiments>4</experiments>
</comment>
<comment type="interaction">
    <interactant intactId="EBI-520880">
        <id>P63045</id>
    </interactant>
    <interactant intactId="EBI-539720">
        <id>P32851</id>
        <label>Stx1a</label>
    </interactant>
    <organismsDiffer>false</organismsDiffer>
    <experiments>8</experiments>
</comment>
<comment type="interaction">
    <interactant intactId="EBI-520880">
        <id>P63045</id>
    </interactant>
    <interactant intactId="EBI-918243">
        <id>Q08850</id>
        <label>Stx4</label>
    </interactant>
    <organismsDiffer>false</organismsDiffer>
    <experiments>8</experiments>
</comment>
<comment type="interaction">
    <interactant intactId="EBI-520880">
        <id>P63045</id>
    </interactant>
    <interactant intactId="EBI-458098">
        <id>P21707</id>
        <label>Syt1</label>
    </interactant>
    <organismsDiffer>false</organismsDiffer>
    <experiments>7</experiments>
</comment>
<comment type="interaction">
    <interactant intactId="EBI-520880">
        <id>P63045</id>
    </interactant>
    <interactant intactId="EBI-520880">
        <id>P63045</id>
        <label>Vamp2</label>
    </interactant>
    <organismsDiffer>false</organismsDiffer>
    <experiments>2</experiments>
</comment>
<comment type="interaction">
    <interactant intactId="EBI-520880">
        <id>P63045</id>
    </interactant>
    <interactant intactId="EBI-8430169">
        <id>Q60770</id>
        <label>Stxbp3</label>
    </interactant>
    <organismsDiffer>true</organismsDiffer>
    <experiments>2</experiments>
</comment>
<comment type="subcellular location">
    <subcellularLocation>
        <location evidence="2">Cytoplasmic vesicle</location>
        <location evidence="2">Secretory vesicle</location>
        <location evidence="2">Synaptic vesicle membrane</location>
        <topology evidence="4">Single-pass type IV membrane protein</topology>
    </subcellularLocation>
    <subcellularLocation>
        <location evidence="9">Cell membrane</location>
    </subcellularLocation>
    <text evidence="2">Colocalizes with PRKCZ and WDFY2 in intracellular vesicles.</text>
</comment>
<comment type="tissue specificity">
    <text evidence="8 10">Nervous system specific. A higher level expression is seen in the brain as compared to the spinal cord (PubMed:2472388). Expressed in hippocampal neurons (PubMed:19196426).</text>
</comment>
<comment type="PTM">
    <text evidence="2">Phosphorylated by PRKCZ in vitro and this phosphorylation is increased in the presence of WDFY2.</text>
</comment>
<comment type="PTM">
    <text evidence="7">(Microbial infection) Targeted and hydrolyzed by C.botulinum neurotoxin type B (BoNT/B, botB) which hydrolyzes the 76-Gln-|-Phe-77 bond and inhibits neurotransmitter release (PubMed:1331807).</text>
</comment>
<comment type="PTM">
    <text evidence="13">(Microbial infection) Targeted and hydrolyzed by C.botulinum neurotoxin type D (BoNT/D, botD) which hydrolyzes the 59-Lys-|-Leu-60 bond and inhibits neurotransmitter release (PubMed:8175689).</text>
</comment>
<comment type="PTM">
    <text evidence="14 17">(Microbial infection) Targeted and hydrolyzed by C.botulinum neurotoxin type F (BoNT/F, botF) which hydrolyzes the 58-Gln-|-Lys-59 bond and probably inhibits neurotransmitter release (PubMed:8505288).</text>
</comment>
<comment type="PTM">
    <text evidence="12">(Microbial infection) Targeted and hydrolyzed by C.botulinum neurotoxin type G (BoNT/G, botG) which hydrolyzes the 81-Ala-|-Ala-82 bond and probably inhibits neurotransmitter release (PubMed:8505288).</text>
</comment>
<comment type="PTM">
    <text evidence="11">(Microbial infection) Targeted and hydrolyzed by C.botulinum neurotoxin type X (BoNT/X) which hydrolyzes the 66-Arg-|-Ala-67 bond and probably inhibits neurotransmitter release (PubMed:28770820). It remains unknown whether BoNT/X is ever produced, or what organisms it targets.</text>
</comment>
<comment type="PTM">
    <text evidence="7 17">(Microbial infection) Targeted and hydrolyzed by C.tetani toxin (tetX) which hydrolyzes the 76-Gln-|-Phe-77 bond and inhibits neurotransmitter release (PubMed:1331807).</text>
</comment>
<comment type="similarity">
    <text evidence="15">Belongs to the synaptobrevin family.</text>
</comment>
<protein>
    <recommendedName>
        <fullName>Vesicle-associated membrane protein 2</fullName>
        <shortName>VAMP-2</shortName>
    </recommendedName>
    <alternativeName>
        <fullName>Synaptobrevin-2</fullName>
    </alternativeName>
</protein>
<dbReference type="EMBL" id="M24105">
    <property type="protein sequence ID" value="AAA42321.1"/>
    <property type="molecule type" value="mRNA"/>
</dbReference>
<dbReference type="EMBL" id="BC074003">
    <property type="protein sequence ID" value="AAH74003.1"/>
    <property type="molecule type" value="mRNA"/>
</dbReference>
<dbReference type="PIR" id="B34288">
    <property type="entry name" value="B34288"/>
</dbReference>
<dbReference type="RefSeq" id="NP_036795.1">
    <property type="nucleotide sequence ID" value="NM_012663.3"/>
</dbReference>
<dbReference type="PDB" id="1KIL">
    <property type="method" value="X-ray"/>
    <property type="resolution" value="2.30 A"/>
    <property type="chains" value="A=28-92"/>
</dbReference>
<dbReference type="PDB" id="1N7S">
    <property type="method" value="X-ray"/>
    <property type="resolution" value="1.45 A"/>
    <property type="chains" value="A=28-88"/>
</dbReference>
<dbReference type="PDB" id="1SFC">
    <property type="method" value="X-ray"/>
    <property type="resolution" value="2.40 A"/>
    <property type="chains" value="A/E/I=1-96"/>
</dbReference>
<dbReference type="PDB" id="2KOG">
    <property type="method" value="NMR"/>
    <property type="chains" value="A=1-116"/>
</dbReference>
<dbReference type="PDB" id="2N1T">
    <property type="method" value="NMR"/>
    <property type="chains" value="A=25-93"/>
</dbReference>
<dbReference type="PDB" id="3HD7">
    <property type="method" value="X-ray"/>
    <property type="resolution" value="3.40 A"/>
    <property type="chains" value="A/E=30-116"/>
</dbReference>
<dbReference type="PDB" id="3IPD">
    <property type="method" value="X-ray"/>
    <property type="resolution" value="4.80 A"/>
    <property type="chains" value="A/E=30-116"/>
</dbReference>
<dbReference type="PDB" id="3J96">
    <property type="method" value="EM"/>
    <property type="resolution" value="7.60 A"/>
    <property type="chains" value="K=28-89"/>
</dbReference>
<dbReference type="PDB" id="3J97">
    <property type="method" value="EM"/>
    <property type="resolution" value="7.80 A"/>
    <property type="chains" value="K=28-89"/>
</dbReference>
<dbReference type="PDB" id="3J98">
    <property type="method" value="EM"/>
    <property type="resolution" value="8.40 A"/>
    <property type="chains" value="K=28-89"/>
</dbReference>
<dbReference type="PDB" id="3J99">
    <property type="method" value="EM"/>
    <property type="resolution" value="8.20 A"/>
    <property type="chains" value="K=28-89"/>
</dbReference>
<dbReference type="PDB" id="5CCG">
    <property type="method" value="X-ray"/>
    <property type="resolution" value="3.50 A"/>
    <property type="chains" value="A/G=28-89"/>
</dbReference>
<dbReference type="PDB" id="5CCH">
    <property type="method" value="X-ray"/>
    <property type="resolution" value="3.60 A"/>
    <property type="chains" value="A=28-89"/>
</dbReference>
<dbReference type="PDB" id="5CCI">
    <property type="method" value="X-ray"/>
    <property type="resolution" value="4.10 A"/>
    <property type="chains" value="A=28-89"/>
</dbReference>
<dbReference type="PDB" id="5W5C">
    <property type="method" value="X-ray"/>
    <property type="resolution" value="1.85 A"/>
    <property type="chains" value="A=28-66"/>
</dbReference>
<dbReference type="PDB" id="5W5D">
    <property type="method" value="X-ray"/>
    <property type="resolution" value="2.50 A"/>
    <property type="chains" value="A=28-66"/>
</dbReference>
<dbReference type="PDB" id="6A30">
    <property type="method" value="X-ray"/>
    <property type="resolution" value="2.79 A"/>
    <property type="chains" value="P=87-92"/>
</dbReference>
<dbReference type="PDB" id="6IP1">
    <property type="method" value="EM"/>
    <property type="resolution" value="3.90 A"/>
    <property type="chains" value="A=1-94"/>
</dbReference>
<dbReference type="PDB" id="6MDM">
    <property type="method" value="EM"/>
    <property type="resolution" value="4.40 A"/>
    <property type="chains" value="J=1-89"/>
</dbReference>
<dbReference type="PDB" id="6MDN">
    <property type="method" value="EM"/>
    <property type="resolution" value="4.40 A"/>
    <property type="chains" value="J=1-72"/>
</dbReference>
<dbReference type="PDB" id="6MTI">
    <property type="method" value="EM"/>
    <property type="resolution" value="10.40 A"/>
    <property type="chains" value="A/E/I/M/Q/U=28-89"/>
</dbReference>
<dbReference type="PDB" id="6WVW">
    <property type="method" value="X-ray"/>
    <property type="resolution" value="2.11 A"/>
    <property type="chains" value="A/E=28-89"/>
</dbReference>
<dbReference type="PDB" id="7UDB">
    <property type="method" value="EM"/>
    <property type="resolution" value="3.50 A"/>
    <property type="chains" value="C=29-83"/>
</dbReference>
<dbReference type="PDBsum" id="1KIL"/>
<dbReference type="PDBsum" id="1N7S"/>
<dbReference type="PDBsum" id="1SFC"/>
<dbReference type="PDBsum" id="2KOG"/>
<dbReference type="PDBsum" id="2N1T"/>
<dbReference type="PDBsum" id="3HD7"/>
<dbReference type="PDBsum" id="3IPD"/>
<dbReference type="PDBsum" id="3J96"/>
<dbReference type="PDBsum" id="3J97"/>
<dbReference type="PDBsum" id="3J98"/>
<dbReference type="PDBsum" id="3J99"/>
<dbReference type="PDBsum" id="5CCG"/>
<dbReference type="PDBsum" id="5CCH"/>
<dbReference type="PDBsum" id="5CCI"/>
<dbReference type="PDBsum" id="5W5C"/>
<dbReference type="PDBsum" id="5W5D"/>
<dbReference type="PDBsum" id="6A30"/>
<dbReference type="PDBsum" id="6IP1"/>
<dbReference type="PDBsum" id="6MDM"/>
<dbReference type="PDBsum" id="6MDN"/>
<dbReference type="PDBsum" id="6MTI"/>
<dbReference type="PDBsum" id="6WVW"/>
<dbReference type="PDBsum" id="7UDB"/>
<dbReference type="BMRB" id="P63045"/>
<dbReference type="EMDB" id="EMD-26455"/>
<dbReference type="EMDB" id="EMD-6206"/>
<dbReference type="EMDB" id="EMD-6207"/>
<dbReference type="EMDB" id="EMD-6208"/>
<dbReference type="EMDB" id="EMD-6209"/>
<dbReference type="EMDB" id="EMD-9100"/>
<dbReference type="EMDB" id="EMD-9101"/>
<dbReference type="EMDB" id="EMD-9697"/>
<dbReference type="SMR" id="P63045"/>
<dbReference type="BioGRID" id="246926">
    <property type="interactions" value="8"/>
</dbReference>
<dbReference type="CORUM" id="P63045"/>
<dbReference type="DIP" id="DIP-35503N"/>
<dbReference type="FunCoup" id="P63045">
    <property type="interactions" value="1903"/>
</dbReference>
<dbReference type="IntAct" id="P63045">
    <property type="interactions" value="25"/>
</dbReference>
<dbReference type="MINT" id="P63045"/>
<dbReference type="STRING" id="10116.ENSRNOP00000054114"/>
<dbReference type="iPTMnet" id="P63045"/>
<dbReference type="PhosphoSitePlus" id="P63045"/>
<dbReference type="SwissPalm" id="P63045"/>
<dbReference type="jPOST" id="P63045"/>
<dbReference type="PaxDb" id="10116-ENSRNOP00000054114"/>
<dbReference type="Ensembl" id="ENSRNOT00000057295.4">
    <property type="protein sequence ID" value="ENSRNOP00000054114.4"/>
    <property type="gene ID" value="ENSRNOG00000006989.8"/>
</dbReference>
<dbReference type="GeneID" id="24803"/>
<dbReference type="KEGG" id="rno:24803"/>
<dbReference type="UCSC" id="RGD:3949">
    <property type="organism name" value="rat"/>
</dbReference>
<dbReference type="AGR" id="RGD:3949"/>
<dbReference type="CTD" id="6844"/>
<dbReference type="RGD" id="3949">
    <property type="gene designation" value="Vamp2"/>
</dbReference>
<dbReference type="eggNOG" id="KOG0860">
    <property type="taxonomic scope" value="Eukaryota"/>
</dbReference>
<dbReference type="GeneTree" id="ENSGT00940000158370"/>
<dbReference type="HOGENOM" id="CLU_064620_4_0_1"/>
<dbReference type="InParanoid" id="P63045"/>
<dbReference type="PhylomeDB" id="P63045"/>
<dbReference type="Reactome" id="R-RNO-181429">
    <property type="pathway name" value="Serotonin Neurotransmitter Release Cycle"/>
</dbReference>
<dbReference type="Reactome" id="R-RNO-181430">
    <property type="pathway name" value="Norepinephrine Neurotransmitter Release Cycle"/>
</dbReference>
<dbReference type="Reactome" id="R-RNO-199992">
    <property type="pathway name" value="trans-Golgi Network Vesicle Budding"/>
</dbReference>
<dbReference type="Reactome" id="R-RNO-210500">
    <property type="pathway name" value="Glutamate Neurotransmitter Release Cycle"/>
</dbReference>
<dbReference type="Reactome" id="R-RNO-212676">
    <property type="pathway name" value="Dopamine Neurotransmitter Release Cycle"/>
</dbReference>
<dbReference type="Reactome" id="R-RNO-264642">
    <property type="pathway name" value="Acetylcholine Neurotransmitter Release Cycle"/>
</dbReference>
<dbReference type="Reactome" id="R-RNO-432720">
    <property type="pathway name" value="Lysosome Vesicle Biogenesis"/>
</dbReference>
<dbReference type="Reactome" id="R-RNO-432722">
    <property type="pathway name" value="Golgi Associated Vesicle Biogenesis"/>
</dbReference>
<dbReference type="Reactome" id="R-RNO-449836">
    <property type="pathway name" value="Other interleukin signaling"/>
</dbReference>
<dbReference type="Reactome" id="R-RNO-8856825">
    <property type="pathway name" value="Cargo recognition for clathrin-mediated endocytosis"/>
</dbReference>
<dbReference type="Reactome" id="R-RNO-8856828">
    <property type="pathway name" value="Clathrin-mediated endocytosis"/>
</dbReference>
<dbReference type="Reactome" id="R-RNO-888590">
    <property type="pathway name" value="GABA synthesis, release, reuptake and degradation"/>
</dbReference>
<dbReference type="Reactome" id="R-RNO-9609523">
    <property type="pathway name" value="Insertion of tail-anchored proteins into the endoplasmic reticulum membrane"/>
</dbReference>
<dbReference type="EvolutionaryTrace" id="P63045"/>
<dbReference type="PRO" id="PR:P63045"/>
<dbReference type="Proteomes" id="UP000002494">
    <property type="component" value="Chromosome 10"/>
</dbReference>
<dbReference type="Bgee" id="ENSRNOG00000006989">
    <property type="expression patterns" value="Expressed in frontal cortex and 20 other cell types or tissues"/>
</dbReference>
<dbReference type="GO" id="GO:0030136">
    <property type="term" value="C:clathrin-coated vesicle"/>
    <property type="evidence" value="ECO:0000250"/>
    <property type="project" value="ParkinsonsUK-UCL"/>
</dbReference>
<dbReference type="GO" id="GO:0005737">
    <property type="term" value="C:cytoplasm"/>
    <property type="evidence" value="ECO:0000266"/>
    <property type="project" value="RGD"/>
</dbReference>
<dbReference type="GO" id="GO:0031410">
    <property type="term" value="C:cytoplasmic vesicle"/>
    <property type="evidence" value="ECO:0000266"/>
    <property type="project" value="RGD"/>
</dbReference>
<dbReference type="GO" id="GO:0030659">
    <property type="term" value="C:cytoplasmic vesicle membrane"/>
    <property type="evidence" value="ECO:0000266"/>
    <property type="project" value="RGD"/>
</dbReference>
<dbReference type="GO" id="GO:0098978">
    <property type="term" value="C:glutamatergic synapse"/>
    <property type="evidence" value="ECO:0000266"/>
    <property type="project" value="RGD"/>
</dbReference>
<dbReference type="GO" id="GO:0016020">
    <property type="term" value="C:membrane"/>
    <property type="evidence" value="ECO:0000250"/>
    <property type="project" value="ParkinsonsUK-UCL"/>
</dbReference>
<dbReference type="GO" id="GO:0044306">
    <property type="term" value="C:neuron projection terminus"/>
    <property type="evidence" value="ECO:0000314"/>
    <property type="project" value="ParkinsonsUK-UCL"/>
</dbReference>
<dbReference type="GO" id="GO:0048471">
    <property type="term" value="C:perinuclear region of cytoplasm"/>
    <property type="evidence" value="ECO:0000266"/>
    <property type="project" value="RGD"/>
</dbReference>
<dbReference type="GO" id="GO:0005886">
    <property type="term" value="C:plasma membrane"/>
    <property type="evidence" value="ECO:0000314"/>
    <property type="project" value="UniProtKB"/>
</dbReference>
<dbReference type="GO" id="GO:0099524">
    <property type="term" value="C:postsynaptic cytosol"/>
    <property type="evidence" value="ECO:0000314"/>
    <property type="project" value="SynGO"/>
</dbReference>
<dbReference type="GO" id="GO:0014069">
    <property type="term" value="C:postsynaptic density"/>
    <property type="evidence" value="ECO:0000314"/>
    <property type="project" value="SynGO"/>
</dbReference>
<dbReference type="GO" id="GO:0030141">
    <property type="term" value="C:secretory granule"/>
    <property type="evidence" value="ECO:0000314"/>
    <property type="project" value="UniProtKB"/>
</dbReference>
<dbReference type="GO" id="GO:0031201">
    <property type="term" value="C:SNARE complex"/>
    <property type="evidence" value="ECO:0000314"/>
    <property type="project" value="ParkinsonsUK-UCL"/>
</dbReference>
<dbReference type="GO" id="GO:0000322">
    <property type="term" value="C:storage vacuole"/>
    <property type="evidence" value="ECO:0000266"/>
    <property type="project" value="RGD"/>
</dbReference>
<dbReference type="GO" id="GO:0045202">
    <property type="term" value="C:synapse"/>
    <property type="evidence" value="ECO:0000266"/>
    <property type="project" value="RGD"/>
</dbReference>
<dbReference type="GO" id="GO:0008021">
    <property type="term" value="C:synaptic vesicle"/>
    <property type="evidence" value="ECO:0000314"/>
    <property type="project" value="ParkinsonsUK-UCL"/>
</dbReference>
<dbReference type="GO" id="GO:0030672">
    <property type="term" value="C:synaptic vesicle membrane"/>
    <property type="evidence" value="ECO:0000314"/>
    <property type="project" value="CAFA"/>
</dbReference>
<dbReference type="GO" id="GO:0070044">
    <property type="term" value="C:synaptobrevin 2-SNAP-25-syntaxin-1a complex"/>
    <property type="evidence" value="ECO:0000314"/>
    <property type="project" value="MGI"/>
</dbReference>
<dbReference type="GO" id="GO:0070032">
    <property type="term" value="C:synaptobrevin 2-SNAP-25-syntaxin-1a-complexin I complex"/>
    <property type="evidence" value="ECO:0000314"/>
    <property type="project" value="MGI"/>
</dbReference>
<dbReference type="GO" id="GO:0070033">
    <property type="term" value="C:synaptobrevin 2-SNAP-25-syntaxin-1a-complexin II complex"/>
    <property type="evidence" value="ECO:0000314"/>
    <property type="project" value="RGD"/>
</dbReference>
<dbReference type="GO" id="GO:0043195">
    <property type="term" value="C:terminal bouton"/>
    <property type="evidence" value="ECO:0007005"/>
    <property type="project" value="ParkinsonsUK-UCL"/>
</dbReference>
<dbReference type="GO" id="GO:0005802">
    <property type="term" value="C:trans-Golgi network"/>
    <property type="evidence" value="ECO:0000266"/>
    <property type="project" value="RGD"/>
</dbReference>
<dbReference type="GO" id="GO:0031982">
    <property type="term" value="C:vesicle"/>
    <property type="evidence" value="ECO:0000266"/>
    <property type="project" value="RGD"/>
</dbReference>
<dbReference type="GO" id="GO:0042589">
    <property type="term" value="C:zymogen granule membrane"/>
    <property type="evidence" value="ECO:0000266"/>
    <property type="project" value="RGD"/>
</dbReference>
<dbReference type="GO" id="GO:0048306">
    <property type="term" value="F:calcium-dependent protein binding"/>
    <property type="evidence" value="ECO:0000353"/>
    <property type="project" value="ParkinsonsUK-UCL"/>
</dbReference>
<dbReference type="GO" id="GO:0005516">
    <property type="term" value="F:calmodulin binding"/>
    <property type="evidence" value="ECO:0000266"/>
    <property type="project" value="RGD"/>
</dbReference>
<dbReference type="GO" id="GO:0042802">
    <property type="term" value="F:identical protein binding"/>
    <property type="evidence" value="ECO:0000353"/>
    <property type="project" value="IntAct"/>
</dbReference>
<dbReference type="GO" id="GO:0008289">
    <property type="term" value="F:lipid binding"/>
    <property type="evidence" value="ECO:0000269"/>
    <property type="project" value="DisProt"/>
</dbReference>
<dbReference type="GO" id="GO:0060090">
    <property type="term" value="F:molecular adaptor activity"/>
    <property type="evidence" value="ECO:0000269"/>
    <property type="project" value="DisProt"/>
</dbReference>
<dbReference type="GO" id="GO:0017022">
    <property type="term" value="F:myosin binding"/>
    <property type="evidence" value="ECO:0000353"/>
    <property type="project" value="RGD"/>
</dbReference>
<dbReference type="GO" id="GO:0005543">
    <property type="term" value="F:phospholipid binding"/>
    <property type="evidence" value="ECO:0000266"/>
    <property type="project" value="RGD"/>
</dbReference>
<dbReference type="GO" id="GO:0044877">
    <property type="term" value="F:protein-containing complex binding"/>
    <property type="evidence" value="ECO:0000353"/>
    <property type="project" value="RGD"/>
</dbReference>
<dbReference type="GO" id="GO:0005484">
    <property type="term" value="F:SNAP receptor activity"/>
    <property type="evidence" value="ECO:0000318"/>
    <property type="project" value="GO_Central"/>
</dbReference>
<dbReference type="GO" id="GO:0000149">
    <property type="term" value="F:SNARE binding"/>
    <property type="evidence" value="ECO:0000314"/>
    <property type="project" value="MGI"/>
</dbReference>
<dbReference type="GO" id="GO:0019905">
    <property type="term" value="F:syntaxin binding"/>
    <property type="evidence" value="ECO:0000266"/>
    <property type="project" value="RGD"/>
</dbReference>
<dbReference type="GO" id="GO:0017075">
    <property type="term" value="F:syntaxin-1 binding"/>
    <property type="evidence" value="ECO:0000314"/>
    <property type="project" value="MGI"/>
</dbReference>
<dbReference type="GO" id="GO:0044325">
    <property type="term" value="F:transmembrane transporter binding"/>
    <property type="evidence" value="ECO:0000353"/>
    <property type="project" value="UniProtKB"/>
</dbReference>
<dbReference type="GO" id="GO:0017156">
    <property type="term" value="P:calcium-ion regulated exocytosis"/>
    <property type="evidence" value="ECO:0000266"/>
    <property type="project" value="RGD"/>
</dbReference>
<dbReference type="GO" id="GO:0032869">
    <property type="term" value="P:cellular response to insulin stimulus"/>
    <property type="evidence" value="ECO:0000266"/>
    <property type="project" value="RGD"/>
</dbReference>
<dbReference type="GO" id="GO:0043308">
    <property type="term" value="P:eosinophil degranulation"/>
    <property type="evidence" value="ECO:0000266"/>
    <property type="project" value="RGD"/>
</dbReference>
<dbReference type="GO" id="GO:0051649">
    <property type="term" value="P:establishment of localization in cell"/>
    <property type="evidence" value="ECO:0000266"/>
    <property type="project" value="RGD"/>
</dbReference>
<dbReference type="GO" id="GO:0098967">
    <property type="term" value="P:exocytic insertion of neurotransmitter receptor to postsynaptic membrane"/>
    <property type="evidence" value="ECO:0000266"/>
    <property type="project" value="RGD"/>
</dbReference>
<dbReference type="GO" id="GO:0043001">
    <property type="term" value="P:Golgi to plasma membrane protein transport"/>
    <property type="evidence" value="ECO:0000266"/>
    <property type="project" value="RGD"/>
</dbReference>
<dbReference type="GO" id="GO:0046879">
    <property type="term" value="P:hormone secretion"/>
    <property type="evidence" value="ECO:0000266"/>
    <property type="project" value="RGD"/>
</dbReference>
<dbReference type="GO" id="GO:0060291">
    <property type="term" value="P:long-term synaptic potentiation"/>
    <property type="evidence" value="ECO:0000266"/>
    <property type="project" value="RGD"/>
</dbReference>
<dbReference type="GO" id="GO:0061025">
    <property type="term" value="P:membrane fusion"/>
    <property type="evidence" value="ECO:0000266"/>
    <property type="project" value="RGD"/>
</dbReference>
<dbReference type="GO" id="GO:0090316">
    <property type="term" value="P:positive regulation of intracellular protein transport"/>
    <property type="evidence" value="ECO:0000266"/>
    <property type="project" value="RGD"/>
</dbReference>
<dbReference type="GO" id="GO:0015031">
    <property type="term" value="P:protein transport"/>
    <property type="evidence" value="ECO:0000266"/>
    <property type="project" value="RGD"/>
</dbReference>
<dbReference type="GO" id="GO:0065003">
    <property type="term" value="P:protein-containing complex assembly"/>
    <property type="evidence" value="ECO:0000314"/>
    <property type="project" value="RGD"/>
</dbReference>
<dbReference type="GO" id="GO:0045055">
    <property type="term" value="P:regulated exocytosis"/>
    <property type="evidence" value="ECO:0000266"/>
    <property type="project" value="RGD"/>
</dbReference>
<dbReference type="GO" id="GO:1902259">
    <property type="term" value="P:regulation of delayed rectifier potassium channel activity"/>
    <property type="evidence" value="ECO:0000314"/>
    <property type="project" value="UniProtKB"/>
</dbReference>
<dbReference type="GO" id="GO:0017157">
    <property type="term" value="P:regulation of exocytosis"/>
    <property type="evidence" value="ECO:0000315"/>
    <property type="project" value="RGD"/>
</dbReference>
<dbReference type="GO" id="GO:1903421">
    <property type="term" value="P:regulation of synaptic vesicle recycling"/>
    <property type="evidence" value="ECO:0000315"/>
    <property type="project" value="RGD"/>
</dbReference>
<dbReference type="GO" id="GO:0060627">
    <property type="term" value="P:regulation of vesicle-mediated transport"/>
    <property type="evidence" value="ECO:0000266"/>
    <property type="project" value="RGD"/>
</dbReference>
<dbReference type="GO" id="GO:0009749">
    <property type="term" value="P:response to glucose"/>
    <property type="evidence" value="ECO:0000314"/>
    <property type="project" value="UniProtKB"/>
</dbReference>
<dbReference type="GO" id="GO:0035493">
    <property type="term" value="P:SNARE complex assembly"/>
    <property type="evidence" value="ECO:0000315"/>
    <property type="project" value="CAFA"/>
</dbReference>
<dbReference type="GO" id="GO:0016081">
    <property type="term" value="P:synaptic vesicle docking"/>
    <property type="evidence" value="ECO:0000266"/>
    <property type="project" value="RGD"/>
</dbReference>
<dbReference type="GO" id="GO:0048488">
    <property type="term" value="P:synaptic vesicle endocytosis"/>
    <property type="evidence" value="ECO:0000250"/>
    <property type="project" value="UniProtKB"/>
</dbReference>
<dbReference type="GO" id="GO:0016079">
    <property type="term" value="P:synaptic vesicle exocytosis"/>
    <property type="evidence" value="ECO:0000314"/>
    <property type="project" value="SynGO"/>
</dbReference>
<dbReference type="GO" id="GO:0006906">
    <property type="term" value="P:vesicle fusion"/>
    <property type="evidence" value="ECO:0000250"/>
    <property type="project" value="UniProtKB"/>
</dbReference>
<dbReference type="GO" id="GO:0016192">
    <property type="term" value="P:vesicle-mediated transport"/>
    <property type="evidence" value="ECO:0000315"/>
    <property type="project" value="RGD"/>
</dbReference>
<dbReference type="GO" id="GO:0099003">
    <property type="term" value="P:vesicle-mediated transport in synapse"/>
    <property type="evidence" value="ECO:0000266"/>
    <property type="project" value="RGD"/>
</dbReference>
<dbReference type="CDD" id="cd15870">
    <property type="entry name" value="R-SNARE_VAMP2"/>
    <property type="match status" value="1"/>
</dbReference>
<dbReference type="DisProt" id="DP00622"/>
<dbReference type="FunFam" id="1.20.5.110:FF:000013">
    <property type="entry name" value="Vesicle-associated membrane protein 2"/>
    <property type="match status" value="1"/>
</dbReference>
<dbReference type="Gene3D" id="1.20.5.110">
    <property type="match status" value="1"/>
</dbReference>
<dbReference type="InterPro" id="IPR001388">
    <property type="entry name" value="Synaptobrevin-like"/>
</dbReference>
<dbReference type="InterPro" id="IPR016444">
    <property type="entry name" value="Synaptobrevin/VAMP"/>
</dbReference>
<dbReference type="InterPro" id="IPR042855">
    <property type="entry name" value="V_SNARE_CC"/>
</dbReference>
<dbReference type="PANTHER" id="PTHR45701">
    <property type="entry name" value="SYNAPTOBREVIN FAMILY MEMBER"/>
    <property type="match status" value="1"/>
</dbReference>
<dbReference type="Pfam" id="PF00957">
    <property type="entry name" value="Synaptobrevin"/>
    <property type="match status" value="1"/>
</dbReference>
<dbReference type="PIRSF" id="PIRSF005409">
    <property type="entry name" value="Synaptobrevin_euk"/>
    <property type="match status" value="1"/>
</dbReference>
<dbReference type="PRINTS" id="PR00219">
    <property type="entry name" value="SYNAPTOBREVN"/>
</dbReference>
<dbReference type="SUPFAM" id="SSF58038">
    <property type="entry name" value="SNARE fusion complex"/>
    <property type="match status" value="1"/>
</dbReference>
<dbReference type="PROSITE" id="PS00417">
    <property type="entry name" value="SYNAPTOBREVIN"/>
    <property type="match status" value="1"/>
</dbReference>
<dbReference type="PROSITE" id="PS50892">
    <property type="entry name" value="V_SNARE"/>
    <property type="match status" value="1"/>
</dbReference>